<keyword id="KW-0378">Hydrolase</keyword>
<keyword id="KW-0645">Protease</keyword>
<keyword id="KW-1185">Reference proteome</keyword>
<keyword id="KW-0677">Repeat</keyword>
<keyword id="KW-0788">Thiol protease</keyword>
<dbReference type="EC" id="3.4.22.-"/>
<dbReference type="EMBL" id="AB072744">
    <property type="protein sequence ID" value="BAB69713.1"/>
    <property type="molecule type" value="mRNA"/>
</dbReference>
<dbReference type="EMBL" id="AB179239">
    <property type="protein sequence ID" value="BAE02290.1"/>
    <property type="molecule type" value="mRNA"/>
</dbReference>
<dbReference type="RefSeq" id="NP_001270318.1">
    <property type="nucleotide sequence ID" value="NM_001283389.1"/>
</dbReference>
<dbReference type="SMR" id="Q95LP4"/>
<dbReference type="STRING" id="9541.ENSMFAP00000016697"/>
<dbReference type="MEROPS" id="C02.018"/>
<dbReference type="eggNOG" id="KOG0045">
    <property type="taxonomic scope" value="Eukaryota"/>
</dbReference>
<dbReference type="BRENDA" id="3.4.22.B30">
    <property type="organism ID" value="1793"/>
</dbReference>
<dbReference type="Proteomes" id="UP000233100">
    <property type="component" value="Unplaced"/>
</dbReference>
<dbReference type="GO" id="GO:0005737">
    <property type="term" value="C:cytoplasm"/>
    <property type="evidence" value="ECO:0007669"/>
    <property type="project" value="TreeGrafter"/>
</dbReference>
<dbReference type="GO" id="GO:0004198">
    <property type="term" value="F:calcium-dependent cysteine-type endopeptidase activity"/>
    <property type="evidence" value="ECO:0007669"/>
    <property type="project" value="InterPro"/>
</dbReference>
<dbReference type="GO" id="GO:0006508">
    <property type="term" value="P:proteolysis"/>
    <property type="evidence" value="ECO:0007669"/>
    <property type="project" value="UniProtKB-KW"/>
</dbReference>
<dbReference type="CDD" id="cd00214">
    <property type="entry name" value="Calpain_III"/>
    <property type="match status" value="2"/>
</dbReference>
<dbReference type="CDD" id="cd00044">
    <property type="entry name" value="CysPc"/>
    <property type="match status" value="1"/>
</dbReference>
<dbReference type="FunFam" id="2.60.120.380:FF:000006">
    <property type="entry name" value="Calpain 10"/>
    <property type="match status" value="1"/>
</dbReference>
<dbReference type="FunFam" id="2.60.120.380:FF:000010">
    <property type="entry name" value="Calpain 10"/>
    <property type="match status" value="1"/>
</dbReference>
<dbReference type="FunFam" id="3.90.70.10:FF:000073">
    <property type="entry name" value="Calpain 10"/>
    <property type="match status" value="1"/>
</dbReference>
<dbReference type="Gene3D" id="2.60.120.380">
    <property type="match status" value="2"/>
</dbReference>
<dbReference type="Gene3D" id="3.90.70.10">
    <property type="entry name" value="Cysteine proteinases"/>
    <property type="match status" value="1"/>
</dbReference>
<dbReference type="InterPro" id="IPR033883">
    <property type="entry name" value="C2_III"/>
</dbReference>
<dbReference type="InterPro" id="IPR022684">
    <property type="entry name" value="Calpain_cysteine_protease"/>
</dbReference>
<dbReference type="InterPro" id="IPR022682">
    <property type="entry name" value="Calpain_domain_III"/>
</dbReference>
<dbReference type="InterPro" id="IPR022683">
    <property type="entry name" value="Calpain_III"/>
</dbReference>
<dbReference type="InterPro" id="IPR036213">
    <property type="entry name" value="Calpain_III_sf"/>
</dbReference>
<dbReference type="InterPro" id="IPR038765">
    <property type="entry name" value="Papain-like_cys_pep_sf"/>
</dbReference>
<dbReference type="InterPro" id="IPR000169">
    <property type="entry name" value="Pept_cys_AS"/>
</dbReference>
<dbReference type="InterPro" id="IPR001300">
    <property type="entry name" value="Peptidase_C2_calpain_cat"/>
</dbReference>
<dbReference type="PANTHER" id="PTHR10183">
    <property type="entry name" value="CALPAIN"/>
    <property type="match status" value="1"/>
</dbReference>
<dbReference type="PANTHER" id="PTHR10183:SF30">
    <property type="entry name" value="CALPAIN-10"/>
    <property type="match status" value="1"/>
</dbReference>
<dbReference type="Pfam" id="PF01067">
    <property type="entry name" value="Calpain_III"/>
    <property type="match status" value="2"/>
</dbReference>
<dbReference type="Pfam" id="PF00648">
    <property type="entry name" value="Peptidase_C2"/>
    <property type="match status" value="1"/>
</dbReference>
<dbReference type="PRINTS" id="PR00704">
    <property type="entry name" value="CALPAIN"/>
</dbReference>
<dbReference type="SMART" id="SM00720">
    <property type="entry name" value="calpain_III"/>
    <property type="match status" value="2"/>
</dbReference>
<dbReference type="SMART" id="SM00230">
    <property type="entry name" value="CysPc"/>
    <property type="match status" value="1"/>
</dbReference>
<dbReference type="SUPFAM" id="SSF49758">
    <property type="entry name" value="Calpain large subunit, middle domain (domain III)"/>
    <property type="match status" value="2"/>
</dbReference>
<dbReference type="SUPFAM" id="SSF54001">
    <property type="entry name" value="Cysteine proteinases"/>
    <property type="match status" value="1"/>
</dbReference>
<dbReference type="PROSITE" id="PS50203">
    <property type="entry name" value="CALPAIN_CAT"/>
    <property type="match status" value="1"/>
</dbReference>
<dbReference type="PROSITE" id="PS00139">
    <property type="entry name" value="THIOL_PROTEASE_CYS"/>
    <property type="match status" value="1"/>
</dbReference>
<reference key="1">
    <citation type="journal article" date="2002" name="BMC Genomics">
        <title>Cynomolgus monkey testicular cDNAs for discovery of novel human genes in the human genome sequence.</title>
        <authorList>
            <person name="Osada N."/>
            <person name="Hida M."/>
            <person name="Kusuda J."/>
            <person name="Tanuma R."/>
            <person name="Hirata M."/>
            <person name="Suto Y."/>
            <person name="Hirai M."/>
            <person name="Terao K."/>
            <person name="Sugano S."/>
            <person name="Hashimoto K."/>
        </authorList>
    </citation>
    <scope>NUCLEOTIDE SEQUENCE [LARGE SCALE MRNA]</scope>
    <source>
        <tissue>Testis</tissue>
    </source>
</reference>
<reference key="2">
    <citation type="submission" date="2005-06" db="EMBL/GenBank/DDBJ databases">
        <title>DNA sequences of macaque genes expressed in brain or testis and its evolutionary implications.</title>
        <authorList>
            <consortium name="International consortium for macaque cDNA sequencing and analysis"/>
        </authorList>
    </citation>
    <scope>NUCLEOTIDE SEQUENCE [LARGE SCALE MRNA]</scope>
    <source>
        <tissue>Testis</tissue>
    </source>
</reference>
<accession>Q95LP4</accession>
<accession>Q4R3M7</accession>
<sequence>MRAGRGATPARELFRDAAFPAADSSLFCDLSTPLAQFREDITWRRPQEICAMPRLFPDDPQEGQVKQGLLGDCWFLCACAALQKSRHLLEQVIPPGQPSWADQEYQGSFTCRIWQFGRWVEVTTDDRLPCLAGRLCFSRCQREDVFWLPLLEKVYAKVHGSYEHLWAGQVADALVDLTGGLAERWSLKGVAGSGGQQDRLGRWEHRTCRQLLRLKDQSLISCSVLSPRAGARELGEFHAFIVSDLRELQDQAGQSILLLRIQNPWGRRCWQGLWREGGEGWSQVDAAVTSELLSQLQEGEFWVEEEEFLREFDEITIGYPITEAGHLQSLYTEKLLCHTRALPGAWVKGQSAGGCRNNSGFPSNPKFWLRVSEPSEVYIAVLQRSRLRAVDWAGRARALVGDSHTSWSPASIPGKHYQAVGLHLWKVEKRRVNLPRVLSTPPVAGTACHAYDREVHLRCELSPGYYLAVPSTFLKDAPGEFLLRVFSTGRVSLSAIRAVAKNASPRAALPAGEWGTVQLRGSWRAGQTAGGSRNFASYPTNPCFPFSVPEGPGPRCVRITLHQHCQPRDTEFHPIGFHIFQVPEGGRSQDAPPLLLQEPLLSCVPHRYAQEVSQLCLLPPGTYRVVPSTYLPDTEGAFTVTIATRIDRSPSWQ</sequence>
<evidence type="ECO:0000250" key="1"/>
<evidence type="ECO:0000255" key="2">
    <source>
        <dbReference type="PROSITE-ProRule" id="PRU00239"/>
    </source>
</evidence>
<evidence type="ECO:0000305" key="3"/>
<name>CAN10_MACFA</name>
<feature type="chain" id="PRO_0000207726" description="Calpain-10">
    <location>
        <begin position="1"/>
        <end position="653"/>
    </location>
</feature>
<feature type="domain" description="Calpain catalytic" evidence="2">
    <location>
        <begin position="13"/>
        <end position="321"/>
    </location>
</feature>
<feature type="region of interest" description="Domain III 1">
    <location>
        <begin position="322"/>
        <end position="494"/>
    </location>
</feature>
<feature type="region of interest" description="Domain III 2">
    <location>
        <begin position="513"/>
        <end position="653"/>
    </location>
</feature>
<feature type="active site" evidence="1">
    <location>
        <position position="73"/>
    </location>
</feature>
<feature type="active site" evidence="1">
    <location>
        <position position="238"/>
    </location>
</feature>
<feature type="active site" evidence="1">
    <location>
        <position position="263"/>
    </location>
</feature>
<comment type="function">
    <text evidence="1">Calcium-regulated non-lysosomal thiol-protease which catalyzes limited proteolysis of substrates involved in cytoskeletal remodeling and signal transduction. May play a role in insulin-stimulated glucose uptake (By similarity).</text>
</comment>
<comment type="similarity">
    <text evidence="3">Belongs to the peptidase C2 family.</text>
</comment>
<gene>
    <name type="primary">CAPN10</name>
    <name type="ORF">QtsA-15844</name>
</gene>
<protein>
    <recommendedName>
        <fullName>Calpain-10</fullName>
        <ecNumber>3.4.22.-</ecNumber>
    </recommendedName>
    <alternativeName>
        <fullName>Calcium-activated neutral proteinase 10</fullName>
        <shortName>CANP 10</shortName>
    </alternativeName>
</protein>
<organism>
    <name type="scientific">Macaca fascicularis</name>
    <name type="common">Crab-eating macaque</name>
    <name type="synonym">Cynomolgus monkey</name>
    <dbReference type="NCBI Taxonomy" id="9541"/>
    <lineage>
        <taxon>Eukaryota</taxon>
        <taxon>Metazoa</taxon>
        <taxon>Chordata</taxon>
        <taxon>Craniata</taxon>
        <taxon>Vertebrata</taxon>
        <taxon>Euteleostomi</taxon>
        <taxon>Mammalia</taxon>
        <taxon>Eutheria</taxon>
        <taxon>Euarchontoglires</taxon>
        <taxon>Primates</taxon>
        <taxon>Haplorrhini</taxon>
        <taxon>Catarrhini</taxon>
        <taxon>Cercopithecidae</taxon>
        <taxon>Cercopithecinae</taxon>
        <taxon>Macaca</taxon>
    </lineage>
</organism>
<proteinExistence type="evidence at transcript level"/>